<feature type="chain" id="PRO_0000367024" description="Beta-galactosidase YesZ">
    <location>
        <begin position="1"/>
        <end position="663"/>
    </location>
</feature>
<feature type="active site" description="Proton donor" evidence="6">
    <location>
        <position position="145"/>
    </location>
</feature>
<feature type="active site" description="Nucleophile" evidence="6">
    <location>
        <position position="296"/>
    </location>
</feature>
<feature type="binding site" evidence="1">
    <location>
        <position position="106"/>
    </location>
    <ligand>
        <name>substrate</name>
    </ligand>
</feature>
<feature type="binding site" evidence="1">
    <location>
        <position position="110"/>
    </location>
    <ligand>
        <name>Zn(2+)</name>
        <dbReference type="ChEBI" id="CHEBI:29105"/>
    </ligand>
</feature>
<feature type="binding site" evidence="1">
    <location>
        <position position="144"/>
    </location>
    <ligand>
        <name>substrate</name>
    </ligand>
</feature>
<feature type="binding site" evidence="1">
    <location>
        <position position="153"/>
    </location>
    <ligand>
        <name>Zn(2+)</name>
        <dbReference type="ChEBI" id="CHEBI:29105"/>
    </ligand>
</feature>
<feature type="binding site" evidence="1">
    <location>
        <position position="155"/>
    </location>
    <ligand>
        <name>Zn(2+)</name>
        <dbReference type="ChEBI" id="CHEBI:29105"/>
    </ligand>
</feature>
<feature type="binding site" evidence="1">
    <location>
        <position position="158"/>
    </location>
    <ligand>
        <name>Zn(2+)</name>
        <dbReference type="ChEBI" id="CHEBI:29105"/>
    </ligand>
</feature>
<feature type="binding site" evidence="1">
    <location>
        <begin position="345"/>
        <end position="348"/>
    </location>
    <ligand>
        <name>substrate</name>
    </ligand>
</feature>
<feature type="mutagenesis site" description="Hydrolysis of the covalent glycosyl-enzyme intermediate is slowed." evidence="4">
    <original>E</original>
    <variation>A</variation>
    <location>
        <position position="145"/>
    </location>
</feature>
<name>BGAL1_BACSU</name>
<organism>
    <name type="scientific">Bacillus subtilis (strain 168)</name>
    <dbReference type="NCBI Taxonomy" id="224308"/>
    <lineage>
        <taxon>Bacteria</taxon>
        <taxon>Bacillati</taxon>
        <taxon>Bacillota</taxon>
        <taxon>Bacilli</taxon>
        <taxon>Bacillales</taxon>
        <taxon>Bacillaceae</taxon>
        <taxon>Bacillus</taxon>
    </lineage>
</organism>
<protein>
    <recommendedName>
        <fullName>Beta-galactosidase YesZ</fullName>
        <shortName>Beta-gal</shortName>
        <ecNumber>3.2.1.23</ecNumber>
    </recommendedName>
    <alternativeName>
        <fullName>Probable rhamnogalacturonan beta-galactosidase</fullName>
    </alternativeName>
</protein>
<comment type="function">
    <text evidence="3">May play a role in the degradation of rhamnogalacturonan derived from plant cell walls.</text>
</comment>
<comment type="catalytic activity">
    <reaction>
        <text>Hydrolysis of terminal non-reducing beta-D-galactose residues in beta-D-galactosides.</text>
        <dbReference type="EC" id="3.2.1.23"/>
    </reaction>
</comment>
<comment type="biophysicochemical properties">
    <kinetics>
        <KM evidence="4">3 mM for p-nitrophenyl beta-D-galactopyranoside (at pH 7.0 and 37 degrees Celsius)</KM>
    </kinetics>
</comment>
<comment type="subunit">
    <text evidence="1">Homotrimer.</text>
</comment>
<comment type="induction">
    <text evidence="3">Up-regulated by growth on type I rhamnogalacturonan.</text>
</comment>
<comment type="disruption phenotype">
    <text evidence="2">No chromogen 5-bromo-4-chloro-3-indolyl-beta-D-galactopyranoside (X-Gal) hydrolysis.</text>
</comment>
<comment type="similarity">
    <text evidence="5">Belongs to the glycosyl hydrolase 42 family.</text>
</comment>
<dbReference type="EC" id="3.2.1.23"/>
<dbReference type="EMBL" id="AL009126">
    <property type="protein sequence ID" value="CAB12527.1"/>
    <property type="molecule type" value="Genomic_DNA"/>
</dbReference>
<dbReference type="PIR" id="A69798">
    <property type="entry name" value="A69798"/>
</dbReference>
<dbReference type="RefSeq" id="WP_003242572.1">
    <property type="nucleotide sequence ID" value="NZ_OZ025638.1"/>
</dbReference>
<dbReference type="SMR" id="O31529"/>
<dbReference type="FunCoup" id="O31529">
    <property type="interactions" value="55"/>
</dbReference>
<dbReference type="STRING" id="224308.BSU07080"/>
<dbReference type="CAZy" id="GH42">
    <property type="family name" value="Glycoside Hydrolase Family 42"/>
</dbReference>
<dbReference type="PaxDb" id="224308-BSU07080"/>
<dbReference type="EnsemblBacteria" id="CAB12527">
    <property type="protein sequence ID" value="CAB12527"/>
    <property type="gene ID" value="BSU_07080"/>
</dbReference>
<dbReference type="GeneID" id="936080"/>
<dbReference type="KEGG" id="bsu:BSU07080"/>
<dbReference type="PATRIC" id="fig|224308.179.peg.768"/>
<dbReference type="eggNOG" id="COG1874">
    <property type="taxonomic scope" value="Bacteria"/>
</dbReference>
<dbReference type="InParanoid" id="O31529"/>
<dbReference type="OrthoDB" id="9800974at2"/>
<dbReference type="PhylomeDB" id="O31529"/>
<dbReference type="BioCyc" id="BSUB:BSU07080-MONOMER"/>
<dbReference type="SABIO-RK" id="O31529"/>
<dbReference type="Proteomes" id="UP000001570">
    <property type="component" value="Chromosome"/>
</dbReference>
<dbReference type="GO" id="GO:0009341">
    <property type="term" value="C:beta-galactosidase complex"/>
    <property type="evidence" value="ECO:0007669"/>
    <property type="project" value="InterPro"/>
</dbReference>
<dbReference type="GO" id="GO:0004565">
    <property type="term" value="F:beta-galactosidase activity"/>
    <property type="evidence" value="ECO:0007669"/>
    <property type="project" value="UniProtKB-EC"/>
</dbReference>
<dbReference type="GO" id="GO:0046872">
    <property type="term" value="F:metal ion binding"/>
    <property type="evidence" value="ECO:0007669"/>
    <property type="project" value="UniProtKB-KW"/>
</dbReference>
<dbReference type="GO" id="GO:0006012">
    <property type="term" value="P:galactose metabolic process"/>
    <property type="evidence" value="ECO:0007669"/>
    <property type="project" value="InterPro"/>
</dbReference>
<dbReference type="CDD" id="cd03143">
    <property type="entry name" value="A4_beta-galactosidase_middle_domain"/>
    <property type="match status" value="1"/>
</dbReference>
<dbReference type="Gene3D" id="3.40.50.880">
    <property type="match status" value="1"/>
</dbReference>
<dbReference type="Gene3D" id="3.20.20.80">
    <property type="entry name" value="Glycosidases"/>
    <property type="match status" value="1"/>
</dbReference>
<dbReference type="InterPro" id="IPR013739">
    <property type="entry name" value="Beta_galactosidase_C"/>
</dbReference>
<dbReference type="InterPro" id="IPR013738">
    <property type="entry name" value="Beta_galactosidase_Trimer"/>
</dbReference>
<dbReference type="InterPro" id="IPR029062">
    <property type="entry name" value="Class_I_gatase-like"/>
</dbReference>
<dbReference type="InterPro" id="IPR003476">
    <property type="entry name" value="Glyco_hydro_42"/>
</dbReference>
<dbReference type="InterPro" id="IPR013529">
    <property type="entry name" value="Glyco_hydro_42_N"/>
</dbReference>
<dbReference type="InterPro" id="IPR017853">
    <property type="entry name" value="Glycoside_hydrolase_SF"/>
</dbReference>
<dbReference type="PANTHER" id="PTHR36447">
    <property type="entry name" value="BETA-GALACTOSIDASE GANA"/>
    <property type="match status" value="1"/>
</dbReference>
<dbReference type="PANTHER" id="PTHR36447:SF2">
    <property type="entry name" value="BETA-GALACTOSIDASE YESZ"/>
    <property type="match status" value="1"/>
</dbReference>
<dbReference type="Pfam" id="PF02449">
    <property type="entry name" value="Glyco_hydro_42"/>
    <property type="match status" value="1"/>
</dbReference>
<dbReference type="Pfam" id="PF08533">
    <property type="entry name" value="Glyco_hydro_42C"/>
    <property type="match status" value="1"/>
</dbReference>
<dbReference type="Pfam" id="PF08532">
    <property type="entry name" value="Glyco_hydro_42M"/>
    <property type="match status" value="1"/>
</dbReference>
<dbReference type="PIRSF" id="PIRSF001084">
    <property type="entry name" value="B-galactosidase"/>
    <property type="match status" value="1"/>
</dbReference>
<dbReference type="SUPFAM" id="SSF51445">
    <property type="entry name" value="(Trans)glycosidases"/>
    <property type="match status" value="1"/>
</dbReference>
<dbReference type="SUPFAM" id="SSF52317">
    <property type="entry name" value="Class I glutamine amidotransferase-like"/>
    <property type="match status" value="1"/>
</dbReference>
<reference key="1">
    <citation type="journal article" date="1997" name="Nature">
        <title>The complete genome sequence of the Gram-positive bacterium Bacillus subtilis.</title>
        <authorList>
            <person name="Kunst F."/>
            <person name="Ogasawara N."/>
            <person name="Moszer I."/>
            <person name="Albertini A.M."/>
            <person name="Alloni G."/>
            <person name="Azevedo V."/>
            <person name="Bertero M.G."/>
            <person name="Bessieres P."/>
            <person name="Bolotin A."/>
            <person name="Borchert S."/>
            <person name="Borriss R."/>
            <person name="Boursier L."/>
            <person name="Brans A."/>
            <person name="Braun M."/>
            <person name="Brignell S.C."/>
            <person name="Bron S."/>
            <person name="Brouillet S."/>
            <person name="Bruschi C.V."/>
            <person name="Caldwell B."/>
            <person name="Capuano V."/>
            <person name="Carter N.M."/>
            <person name="Choi S.-K."/>
            <person name="Codani J.-J."/>
            <person name="Connerton I.F."/>
            <person name="Cummings N.J."/>
            <person name="Daniel R.A."/>
            <person name="Denizot F."/>
            <person name="Devine K.M."/>
            <person name="Duesterhoeft A."/>
            <person name="Ehrlich S.D."/>
            <person name="Emmerson P.T."/>
            <person name="Entian K.-D."/>
            <person name="Errington J."/>
            <person name="Fabret C."/>
            <person name="Ferrari E."/>
            <person name="Foulger D."/>
            <person name="Fritz C."/>
            <person name="Fujita M."/>
            <person name="Fujita Y."/>
            <person name="Fuma S."/>
            <person name="Galizzi A."/>
            <person name="Galleron N."/>
            <person name="Ghim S.-Y."/>
            <person name="Glaser P."/>
            <person name="Goffeau A."/>
            <person name="Golightly E.J."/>
            <person name="Grandi G."/>
            <person name="Guiseppi G."/>
            <person name="Guy B.J."/>
            <person name="Haga K."/>
            <person name="Haiech J."/>
            <person name="Harwood C.R."/>
            <person name="Henaut A."/>
            <person name="Hilbert H."/>
            <person name="Holsappel S."/>
            <person name="Hosono S."/>
            <person name="Hullo M.-F."/>
            <person name="Itaya M."/>
            <person name="Jones L.-M."/>
            <person name="Joris B."/>
            <person name="Karamata D."/>
            <person name="Kasahara Y."/>
            <person name="Klaerr-Blanchard M."/>
            <person name="Klein C."/>
            <person name="Kobayashi Y."/>
            <person name="Koetter P."/>
            <person name="Koningstein G."/>
            <person name="Krogh S."/>
            <person name="Kumano M."/>
            <person name="Kurita K."/>
            <person name="Lapidus A."/>
            <person name="Lardinois S."/>
            <person name="Lauber J."/>
            <person name="Lazarevic V."/>
            <person name="Lee S.-M."/>
            <person name="Levine A."/>
            <person name="Liu H."/>
            <person name="Masuda S."/>
            <person name="Mauel C."/>
            <person name="Medigue C."/>
            <person name="Medina N."/>
            <person name="Mellado R.P."/>
            <person name="Mizuno M."/>
            <person name="Moestl D."/>
            <person name="Nakai S."/>
            <person name="Noback M."/>
            <person name="Noone D."/>
            <person name="O'Reilly M."/>
            <person name="Ogawa K."/>
            <person name="Ogiwara A."/>
            <person name="Oudega B."/>
            <person name="Park S.-H."/>
            <person name="Parro V."/>
            <person name="Pohl T.M."/>
            <person name="Portetelle D."/>
            <person name="Porwollik S."/>
            <person name="Prescott A.M."/>
            <person name="Presecan E."/>
            <person name="Pujic P."/>
            <person name="Purnelle B."/>
            <person name="Rapoport G."/>
            <person name="Rey M."/>
            <person name="Reynolds S."/>
            <person name="Rieger M."/>
            <person name="Rivolta C."/>
            <person name="Rocha E."/>
            <person name="Roche B."/>
            <person name="Rose M."/>
            <person name="Sadaie Y."/>
            <person name="Sato T."/>
            <person name="Scanlan E."/>
            <person name="Schleich S."/>
            <person name="Schroeter R."/>
            <person name="Scoffone F."/>
            <person name="Sekiguchi J."/>
            <person name="Sekowska A."/>
            <person name="Seror S.J."/>
            <person name="Serror P."/>
            <person name="Shin B.-S."/>
            <person name="Soldo B."/>
            <person name="Sorokin A."/>
            <person name="Tacconi E."/>
            <person name="Takagi T."/>
            <person name="Takahashi H."/>
            <person name="Takemaru K."/>
            <person name="Takeuchi M."/>
            <person name="Tamakoshi A."/>
            <person name="Tanaka T."/>
            <person name="Terpstra P."/>
            <person name="Tognoni A."/>
            <person name="Tosato V."/>
            <person name="Uchiyama S."/>
            <person name="Vandenbol M."/>
            <person name="Vannier F."/>
            <person name="Vassarotti A."/>
            <person name="Viari A."/>
            <person name="Wambutt R."/>
            <person name="Wedler E."/>
            <person name="Wedler H."/>
            <person name="Weitzenegger T."/>
            <person name="Winters P."/>
            <person name="Wipat A."/>
            <person name="Yamamoto H."/>
            <person name="Yamane K."/>
            <person name="Yasumoto K."/>
            <person name="Yata K."/>
            <person name="Yoshida K."/>
            <person name="Yoshikawa H.-F."/>
            <person name="Zumstein E."/>
            <person name="Yoshikawa H."/>
            <person name="Danchin A."/>
        </authorList>
    </citation>
    <scope>NUCLEOTIDE SEQUENCE [LARGE SCALE GENOMIC DNA]</scope>
    <source>
        <strain>168</strain>
    </source>
</reference>
<reference key="2">
    <citation type="journal article" date="2006" name="Appl. Environ. Microbiol.">
        <title>Bioinformatic, genetic, and biochemical evidence that some glycoside hydrolase family 42 beta-galactosidases are arabinogalactan type I oligomer hydrolases.</title>
        <authorList>
            <person name="Shipkowski S."/>
            <person name="Brenchley J.E."/>
        </authorList>
    </citation>
    <scope>DISRUPTION PHENOTYPE</scope>
</reference>
<reference key="3">
    <citation type="journal article" date="2007" name="Appl. Environ. Microbiol.">
        <title>Plant cell wall degradation by saprophytic Bacillus subtilis strains: gene clusters responsible for rhamnogalacturonan depolymerization.</title>
        <authorList>
            <person name="Ochiai A."/>
            <person name="Itoh T."/>
            <person name="Kawamata A."/>
            <person name="Hashimoto W."/>
            <person name="Murata K."/>
        </authorList>
    </citation>
    <scope>FUNCTION IN DEGRADATION OF TYPE I RHAMNOGALACTURONAN</scope>
    <scope>INDUCTION</scope>
    <source>
        <strain>168</strain>
    </source>
</reference>
<reference key="4">
    <citation type="journal article" date="2007" name="FEBS Lett.">
        <title>Identification of the catalytic nucleophile in family 42 beta-galactosidases by intermediate trapping and peptide mapping: YesZ from Bacillus subtilis.</title>
        <authorList>
            <person name="Shaikh F.A."/>
            <person name="Muellegger J."/>
            <person name="He S."/>
            <person name="Withers S.G."/>
        </authorList>
    </citation>
    <scope>BIOPHYSICOCHEMICAL PROPERTIES</scope>
    <scope>ACTIVE SITE</scope>
    <scope>MUTAGENESIS OF GLU-145</scope>
</reference>
<proteinExistence type="evidence at protein level"/>
<gene>
    <name type="primary">yesZ</name>
    <name type="ordered locus">BSU07080</name>
</gene>
<keyword id="KW-0326">Glycosidase</keyword>
<keyword id="KW-0378">Hydrolase</keyword>
<keyword id="KW-0479">Metal-binding</keyword>
<keyword id="KW-1185">Reference proteome</keyword>
<keyword id="KW-0862">Zinc</keyword>
<evidence type="ECO:0000250" key="1"/>
<evidence type="ECO:0000269" key="2">
    <source>
    </source>
</evidence>
<evidence type="ECO:0000269" key="3">
    <source>
    </source>
</evidence>
<evidence type="ECO:0000269" key="4">
    <source>
    </source>
</evidence>
<evidence type="ECO:0000305" key="5"/>
<evidence type="ECO:0000305" key="6">
    <source>
    </source>
</evidence>
<accession>O31529</accession>
<sequence length="663" mass="74099">MRKLYHGACYYPELWDEETIQQDIDIMREVGVNVVRIGEFAWSVMEPEEGKIDVGFFKEIIARLYDSGIETIMCTPTPTPPIWFSHGRPERMHANEKREIMGHGSRQHACTNNPYFRKKAAIITTAIAKELGRLPGLIGWQLDNEFKCHVAECMCETCLRLWHDWLKNRYGVIERLNEAWGTDVWSETYQTFEQVPQPGPAPFLHHASLRTMYQLFSMEMIASFADEQAKIIRCYSDAPITHNGSVMFSVDNERMFQNLDFASYDTYASQENASAFLLNCDLWRNLKQGRPFWILETSPSYAASLESSAYPHADGYLQAEAVSSYALGSQGFCYWLWRQQRSGSEISHGSVLSAWGEPTIGYQNVLAVERARKEIEPIILSTEPVQAEAAMTYSDRAKAFIKTEPHRGLRHRSLVTHFYERILNTGIHRDLIPEGAPLDGYRLLFTPFVPYLSSEFIKKASAFAEAGGIWITGPLTGGRTCEHTIHTDCGLGELEKTSGIKTLFTFPMNENVNTGKAFGITAPLGLWSAVFDTESGNTLGTVEAGPGAGHAFLTERNYGEGKIVMLGSLPSGKEGDAMLEALVRHYAEEAVISSRSDVTPGTIVAPRIGENGLVWIVVNMDGKGGSVTLPESGTDLLTHRLEKAGRLAVGPHEYRVIQFDNHS</sequence>